<comment type="catalytic activity">
    <reaction evidence="1">
        <text>(S)-malate + NAD(+) = pyruvate + CO2 + NADH</text>
        <dbReference type="Rhea" id="RHEA:12653"/>
        <dbReference type="ChEBI" id="CHEBI:15361"/>
        <dbReference type="ChEBI" id="CHEBI:15589"/>
        <dbReference type="ChEBI" id="CHEBI:16526"/>
        <dbReference type="ChEBI" id="CHEBI:57540"/>
        <dbReference type="ChEBI" id="CHEBI:57945"/>
        <dbReference type="EC" id="1.1.1.38"/>
    </reaction>
</comment>
<comment type="catalytic activity">
    <reaction evidence="1">
        <text>oxaloacetate + H(+) = pyruvate + CO2</text>
        <dbReference type="Rhea" id="RHEA:15641"/>
        <dbReference type="ChEBI" id="CHEBI:15361"/>
        <dbReference type="ChEBI" id="CHEBI:15378"/>
        <dbReference type="ChEBI" id="CHEBI:16452"/>
        <dbReference type="ChEBI" id="CHEBI:16526"/>
        <dbReference type="EC" id="1.1.1.38"/>
    </reaction>
</comment>
<comment type="cofactor">
    <cofactor evidence="1">
        <name>Mg(2+)</name>
        <dbReference type="ChEBI" id="CHEBI:18420"/>
    </cofactor>
    <cofactor evidence="1">
        <name>Mn(2+)</name>
        <dbReference type="ChEBI" id="CHEBI:29035"/>
    </cofactor>
    <text evidence="1">Divalent metal cations. Prefers magnesium or manganese.</text>
</comment>
<comment type="subunit">
    <text evidence="1">Homotetramer.</text>
</comment>
<comment type="similarity">
    <text evidence="1">Belongs to the malic enzymes family.</text>
</comment>
<sequence>MEPKTKKQRSLYIPYAGPVLLEFPLLNKGSAFSMEERRNFNLLGLLPEVVETIEEQAERAWIQYQGFKTEIDKHIYLRNIQDTNETLFYRLVNNHLDEMMPVIYTPTVGAACERFSEIYRRSRGVFISYQNRHNMDDILQNVPNHNIKVIVVTDGERILGLGDQGIGGMGIPIGKLSLYTACGGISPAYTLPVVLDVGTNNQQLLNDPLYMGWRNPRITDDEYYEFVDEFIQAVKQRWPDVLLQFEDFAQKNAMPLLNRYRNEICSFNDDIQGTAAVTVGTLIAASRAAGGQLSEKKIVFLGAGSAGCGIAEMIISQTQREGLSEEAARQKVFMVDRFGLLTDKMPNLLPFQTKLVQKRENLSDWDTDSDVLSLLDVVRNVKPDILIGVSGQTGLFTEEIIREMHKHCPRPIVMPLSNPTSRVEATPQDIIAWTEGNALVATGSPFNPVVWKDKIYPIAQCNNAFIFPGIGLGVIASGASRITDEMLMSASETLAQYSPLVLNGEGLVLPELKDIQKVSRAIAFAVGKMAQQQGVAVKTSAEALQQAIDDNFWQAEYRDYRRTSI</sequence>
<proteinExistence type="inferred from homology"/>
<accession>A7ZLS1</accession>
<dbReference type="EC" id="1.1.1.38" evidence="1"/>
<dbReference type="EMBL" id="CP000800">
    <property type="protein sequence ID" value="ABV19507.1"/>
    <property type="molecule type" value="Genomic_DNA"/>
</dbReference>
<dbReference type="RefSeq" id="WP_000433475.1">
    <property type="nucleotide sequence ID" value="NC_009801.1"/>
</dbReference>
<dbReference type="SMR" id="A7ZLS1"/>
<dbReference type="GeneID" id="75203182"/>
<dbReference type="KEGG" id="ecw:EcE24377A_1661"/>
<dbReference type="HOGENOM" id="CLU_011405_5_2_6"/>
<dbReference type="Proteomes" id="UP000001122">
    <property type="component" value="Chromosome"/>
</dbReference>
<dbReference type="GO" id="GO:0005829">
    <property type="term" value="C:cytosol"/>
    <property type="evidence" value="ECO:0007669"/>
    <property type="project" value="TreeGrafter"/>
</dbReference>
<dbReference type="GO" id="GO:0004471">
    <property type="term" value="F:malate dehydrogenase (decarboxylating) (NAD+) activity"/>
    <property type="evidence" value="ECO:0007669"/>
    <property type="project" value="UniProtKB-UniRule"/>
</dbReference>
<dbReference type="GO" id="GO:0046872">
    <property type="term" value="F:metal ion binding"/>
    <property type="evidence" value="ECO:0007669"/>
    <property type="project" value="UniProtKB-KW"/>
</dbReference>
<dbReference type="GO" id="GO:0051287">
    <property type="term" value="F:NAD binding"/>
    <property type="evidence" value="ECO:0007669"/>
    <property type="project" value="InterPro"/>
</dbReference>
<dbReference type="GO" id="GO:0008948">
    <property type="term" value="F:oxaloacetate decarboxylase activity"/>
    <property type="evidence" value="ECO:0007669"/>
    <property type="project" value="UniProtKB-UniRule"/>
</dbReference>
<dbReference type="GO" id="GO:0006108">
    <property type="term" value="P:malate metabolic process"/>
    <property type="evidence" value="ECO:0007669"/>
    <property type="project" value="TreeGrafter"/>
</dbReference>
<dbReference type="CDD" id="cd05312">
    <property type="entry name" value="NAD_bind_1_malic_enz"/>
    <property type="match status" value="1"/>
</dbReference>
<dbReference type="FunFam" id="3.40.50.10380:FF:000001">
    <property type="entry name" value="NAD-dependent malic enzyme"/>
    <property type="match status" value="1"/>
</dbReference>
<dbReference type="FunFam" id="3.40.50.720:FF:000055">
    <property type="entry name" value="NAD-dependent malic enzyme"/>
    <property type="match status" value="1"/>
</dbReference>
<dbReference type="Gene3D" id="3.40.50.10380">
    <property type="entry name" value="Malic enzyme, N-terminal domain"/>
    <property type="match status" value="1"/>
</dbReference>
<dbReference type="Gene3D" id="3.40.50.720">
    <property type="entry name" value="NAD(P)-binding Rossmann-like Domain"/>
    <property type="match status" value="1"/>
</dbReference>
<dbReference type="HAMAP" id="MF_01619">
    <property type="entry name" value="NAD_malic_enz"/>
    <property type="match status" value="1"/>
</dbReference>
<dbReference type="InterPro" id="IPR046346">
    <property type="entry name" value="Aminoacid_DH-like_N_sf"/>
</dbReference>
<dbReference type="InterPro" id="IPR015884">
    <property type="entry name" value="Malic_enzyme_CS"/>
</dbReference>
<dbReference type="InterPro" id="IPR012301">
    <property type="entry name" value="Malic_N_dom"/>
</dbReference>
<dbReference type="InterPro" id="IPR037062">
    <property type="entry name" value="Malic_N_dom_sf"/>
</dbReference>
<dbReference type="InterPro" id="IPR012302">
    <property type="entry name" value="Malic_NAD-bd"/>
</dbReference>
<dbReference type="InterPro" id="IPR001891">
    <property type="entry name" value="Malic_OxRdtase"/>
</dbReference>
<dbReference type="InterPro" id="IPR036291">
    <property type="entry name" value="NAD(P)-bd_dom_sf"/>
</dbReference>
<dbReference type="InterPro" id="IPR023667">
    <property type="entry name" value="NAD_malic_enz_proteobac"/>
</dbReference>
<dbReference type="NCBIfam" id="NF010052">
    <property type="entry name" value="PRK13529.1"/>
    <property type="match status" value="1"/>
</dbReference>
<dbReference type="PANTHER" id="PTHR23406">
    <property type="entry name" value="MALIC ENZYME-RELATED"/>
    <property type="match status" value="1"/>
</dbReference>
<dbReference type="PANTHER" id="PTHR23406:SF34">
    <property type="entry name" value="NAD-DEPENDENT MALIC ENZYME, MITOCHONDRIAL"/>
    <property type="match status" value="1"/>
</dbReference>
<dbReference type="Pfam" id="PF00390">
    <property type="entry name" value="malic"/>
    <property type="match status" value="1"/>
</dbReference>
<dbReference type="Pfam" id="PF03949">
    <property type="entry name" value="Malic_M"/>
    <property type="match status" value="1"/>
</dbReference>
<dbReference type="PIRSF" id="PIRSF000106">
    <property type="entry name" value="ME"/>
    <property type="match status" value="1"/>
</dbReference>
<dbReference type="PRINTS" id="PR00072">
    <property type="entry name" value="MALOXRDTASE"/>
</dbReference>
<dbReference type="SMART" id="SM01274">
    <property type="entry name" value="malic"/>
    <property type="match status" value="1"/>
</dbReference>
<dbReference type="SMART" id="SM00919">
    <property type="entry name" value="Malic_M"/>
    <property type="match status" value="1"/>
</dbReference>
<dbReference type="SUPFAM" id="SSF53223">
    <property type="entry name" value="Aminoacid dehydrogenase-like, N-terminal domain"/>
    <property type="match status" value="1"/>
</dbReference>
<dbReference type="SUPFAM" id="SSF51735">
    <property type="entry name" value="NAD(P)-binding Rossmann-fold domains"/>
    <property type="match status" value="1"/>
</dbReference>
<dbReference type="PROSITE" id="PS00331">
    <property type="entry name" value="MALIC_ENZYMES"/>
    <property type="match status" value="1"/>
</dbReference>
<gene>
    <name evidence="1" type="primary">maeA</name>
    <name type="ordered locus">EcE24377A_1661</name>
</gene>
<evidence type="ECO:0000255" key="1">
    <source>
        <dbReference type="HAMAP-Rule" id="MF_01619"/>
    </source>
</evidence>
<keyword id="KW-0479">Metal-binding</keyword>
<keyword id="KW-0520">NAD</keyword>
<keyword id="KW-0560">Oxidoreductase</keyword>
<keyword id="KW-1185">Reference proteome</keyword>
<name>MAO1_ECO24</name>
<protein>
    <recommendedName>
        <fullName evidence="1">NAD-dependent malic enzyme</fullName>
        <shortName evidence="1">NAD-ME</shortName>
        <ecNumber evidence="1">1.1.1.38</ecNumber>
    </recommendedName>
</protein>
<organism>
    <name type="scientific">Escherichia coli O139:H28 (strain E24377A / ETEC)</name>
    <dbReference type="NCBI Taxonomy" id="331111"/>
    <lineage>
        <taxon>Bacteria</taxon>
        <taxon>Pseudomonadati</taxon>
        <taxon>Pseudomonadota</taxon>
        <taxon>Gammaproteobacteria</taxon>
        <taxon>Enterobacterales</taxon>
        <taxon>Enterobacteriaceae</taxon>
        <taxon>Escherichia</taxon>
    </lineage>
</organism>
<reference key="1">
    <citation type="journal article" date="2008" name="J. Bacteriol.">
        <title>The pangenome structure of Escherichia coli: comparative genomic analysis of E. coli commensal and pathogenic isolates.</title>
        <authorList>
            <person name="Rasko D.A."/>
            <person name="Rosovitz M.J."/>
            <person name="Myers G.S.A."/>
            <person name="Mongodin E.F."/>
            <person name="Fricke W.F."/>
            <person name="Gajer P."/>
            <person name="Crabtree J."/>
            <person name="Sebaihia M."/>
            <person name="Thomson N.R."/>
            <person name="Chaudhuri R."/>
            <person name="Henderson I.R."/>
            <person name="Sperandio V."/>
            <person name="Ravel J."/>
        </authorList>
    </citation>
    <scope>NUCLEOTIDE SEQUENCE [LARGE SCALE GENOMIC DNA]</scope>
    <source>
        <strain>E24377A / ETEC</strain>
    </source>
</reference>
<feature type="chain" id="PRO_1000069528" description="NAD-dependent malic enzyme">
    <location>
        <begin position="1"/>
        <end position="565"/>
    </location>
</feature>
<feature type="active site" description="Proton donor" evidence="1">
    <location>
        <position position="104"/>
    </location>
</feature>
<feature type="active site" description="Proton acceptor" evidence="1">
    <location>
        <position position="175"/>
    </location>
</feature>
<feature type="binding site" evidence="1">
    <location>
        <position position="157"/>
    </location>
    <ligand>
        <name>NAD(+)</name>
        <dbReference type="ChEBI" id="CHEBI:57540"/>
    </ligand>
</feature>
<feature type="binding site" evidence="1">
    <location>
        <position position="246"/>
    </location>
    <ligand>
        <name>a divalent metal cation</name>
        <dbReference type="ChEBI" id="CHEBI:60240"/>
    </ligand>
</feature>
<feature type="binding site" evidence="1">
    <location>
        <position position="247"/>
    </location>
    <ligand>
        <name>a divalent metal cation</name>
        <dbReference type="ChEBI" id="CHEBI:60240"/>
    </ligand>
</feature>
<feature type="binding site" evidence="1">
    <location>
        <position position="270"/>
    </location>
    <ligand>
        <name>a divalent metal cation</name>
        <dbReference type="ChEBI" id="CHEBI:60240"/>
    </ligand>
</feature>
<feature type="binding site" evidence="1">
    <location>
        <position position="270"/>
    </location>
    <ligand>
        <name>NAD(+)</name>
        <dbReference type="ChEBI" id="CHEBI:57540"/>
    </ligand>
</feature>
<feature type="binding site" evidence="1">
    <location>
        <position position="418"/>
    </location>
    <ligand>
        <name>NAD(+)</name>
        <dbReference type="ChEBI" id="CHEBI:57540"/>
    </ligand>
</feature>
<feature type="site" description="Important for activity" evidence="1">
    <location>
        <position position="270"/>
    </location>
</feature>